<dbReference type="EMBL" id="CP001176">
    <property type="protein sequence ID" value="ACK63334.1"/>
    <property type="molecule type" value="Genomic_DNA"/>
</dbReference>
<dbReference type="RefSeq" id="WP_000052064.1">
    <property type="nucleotide sequence ID" value="NZ_VEHB01000004.1"/>
</dbReference>
<dbReference type="SMR" id="B7HFK7"/>
<dbReference type="GeneID" id="93005813"/>
<dbReference type="KEGG" id="bcb:BCB4264_A5432"/>
<dbReference type="HOGENOM" id="CLU_148047_1_1_9"/>
<dbReference type="Proteomes" id="UP000007096">
    <property type="component" value="Chromosome"/>
</dbReference>
<dbReference type="GO" id="GO:0005886">
    <property type="term" value="C:plasma membrane"/>
    <property type="evidence" value="ECO:0007669"/>
    <property type="project" value="UniProtKB-SubCell"/>
</dbReference>
<dbReference type="GO" id="GO:0045259">
    <property type="term" value="C:proton-transporting ATP synthase complex"/>
    <property type="evidence" value="ECO:0007669"/>
    <property type="project" value="UniProtKB-KW"/>
</dbReference>
<dbReference type="GO" id="GO:0033177">
    <property type="term" value="C:proton-transporting two-sector ATPase complex, proton-transporting domain"/>
    <property type="evidence" value="ECO:0007669"/>
    <property type="project" value="InterPro"/>
</dbReference>
<dbReference type="GO" id="GO:0008289">
    <property type="term" value="F:lipid binding"/>
    <property type="evidence" value="ECO:0007669"/>
    <property type="project" value="UniProtKB-KW"/>
</dbReference>
<dbReference type="GO" id="GO:0046933">
    <property type="term" value="F:proton-transporting ATP synthase activity, rotational mechanism"/>
    <property type="evidence" value="ECO:0007669"/>
    <property type="project" value="UniProtKB-UniRule"/>
</dbReference>
<dbReference type="CDD" id="cd18185">
    <property type="entry name" value="ATP-synt_Fo_c_ATPE"/>
    <property type="match status" value="1"/>
</dbReference>
<dbReference type="FunFam" id="1.20.20.10:FF:000004">
    <property type="entry name" value="ATP synthase subunit c"/>
    <property type="match status" value="1"/>
</dbReference>
<dbReference type="Gene3D" id="1.20.20.10">
    <property type="entry name" value="F1F0 ATP synthase subunit C"/>
    <property type="match status" value="1"/>
</dbReference>
<dbReference type="HAMAP" id="MF_01396">
    <property type="entry name" value="ATP_synth_c_bact"/>
    <property type="match status" value="1"/>
</dbReference>
<dbReference type="InterPro" id="IPR005953">
    <property type="entry name" value="ATP_synth_csu_bac/chlpt"/>
</dbReference>
<dbReference type="InterPro" id="IPR000454">
    <property type="entry name" value="ATP_synth_F0_csu"/>
</dbReference>
<dbReference type="InterPro" id="IPR020537">
    <property type="entry name" value="ATP_synth_F0_csu_DDCD_BS"/>
</dbReference>
<dbReference type="InterPro" id="IPR038662">
    <property type="entry name" value="ATP_synth_F0_csu_sf"/>
</dbReference>
<dbReference type="InterPro" id="IPR002379">
    <property type="entry name" value="ATPase_proteolipid_c-like_dom"/>
</dbReference>
<dbReference type="InterPro" id="IPR035921">
    <property type="entry name" value="F/V-ATP_Csub_sf"/>
</dbReference>
<dbReference type="NCBIfam" id="TIGR01260">
    <property type="entry name" value="ATP_synt_c"/>
    <property type="match status" value="1"/>
</dbReference>
<dbReference type="NCBIfam" id="NF005363">
    <property type="entry name" value="PRK06876.1"/>
    <property type="match status" value="1"/>
</dbReference>
<dbReference type="PANTHER" id="PTHR10031">
    <property type="entry name" value="ATP SYNTHASE LIPID-BINDING PROTEIN, MITOCHONDRIAL"/>
    <property type="match status" value="1"/>
</dbReference>
<dbReference type="PANTHER" id="PTHR10031:SF0">
    <property type="entry name" value="ATPASE PROTEIN 9"/>
    <property type="match status" value="1"/>
</dbReference>
<dbReference type="Pfam" id="PF00137">
    <property type="entry name" value="ATP-synt_C"/>
    <property type="match status" value="1"/>
</dbReference>
<dbReference type="PRINTS" id="PR00124">
    <property type="entry name" value="ATPASEC"/>
</dbReference>
<dbReference type="SUPFAM" id="SSF81333">
    <property type="entry name" value="F1F0 ATP synthase subunit C"/>
    <property type="match status" value="1"/>
</dbReference>
<dbReference type="PROSITE" id="PS00605">
    <property type="entry name" value="ATPASE_C"/>
    <property type="match status" value="1"/>
</dbReference>
<gene>
    <name evidence="1" type="primary">atpE</name>
    <name type="ordered locus">BCB4264_A5432</name>
</gene>
<keyword id="KW-0066">ATP synthesis</keyword>
<keyword id="KW-1003">Cell membrane</keyword>
<keyword id="KW-0138">CF(0)</keyword>
<keyword id="KW-0375">Hydrogen ion transport</keyword>
<keyword id="KW-0406">Ion transport</keyword>
<keyword id="KW-0446">Lipid-binding</keyword>
<keyword id="KW-0472">Membrane</keyword>
<keyword id="KW-0812">Transmembrane</keyword>
<keyword id="KW-1133">Transmembrane helix</keyword>
<keyword id="KW-0813">Transport</keyword>
<evidence type="ECO:0000255" key="1">
    <source>
        <dbReference type="HAMAP-Rule" id="MF_01396"/>
    </source>
</evidence>
<comment type="function">
    <text evidence="1">F(1)F(0) ATP synthase produces ATP from ADP in the presence of a proton or sodium gradient. F-type ATPases consist of two structural domains, F(1) containing the extramembraneous catalytic core and F(0) containing the membrane proton channel, linked together by a central stalk and a peripheral stalk. During catalysis, ATP synthesis in the catalytic domain of F(1) is coupled via a rotary mechanism of the central stalk subunits to proton translocation.</text>
</comment>
<comment type="function">
    <text evidence="1">Key component of the F(0) channel; it plays a direct role in translocation across the membrane. A homomeric c-ring of between 10-14 subunits forms the central stalk rotor element with the F(1) delta and epsilon subunits.</text>
</comment>
<comment type="subunit">
    <text evidence="1">F-type ATPases have 2 components, F(1) - the catalytic core - and F(0) - the membrane proton channel. F(1) has five subunits: alpha(3), beta(3), gamma(1), delta(1), epsilon(1). F(0) has three main subunits: a(1), b(2) and c(10-14). The alpha and beta chains form an alternating ring which encloses part of the gamma chain. F(1) is attached to F(0) by a central stalk formed by the gamma and epsilon chains, while a peripheral stalk is formed by the delta and b chains.</text>
</comment>
<comment type="subcellular location">
    <subcellularLocation>
        <location evidence="1">Cell membrane</location>
        <topology evidence="1">Multi-pass membrane protein</topology>
    </subcellularLocation>
</comment>
<comment type="similarity">
    <text evidence="1">Belongs to the ATPase C chain family.</text>
</comment>
<organism>
    <name type="scientific">Bacillus cereus (strain B4264)</name>
    <dbReference type="NCBI Taxonomy" id="405532"/>
    <lineage>
        <taxon>Bacteria</taxon>
        <taxon>Bacillati</taxon>
        <taxon>Bacillota</taxon>
        <taxon>Bacilli</taxon>
        <taxon>Bacillales</taxon>
        <taxon>Bacillaceae</taxon>
        <taxon>Bacillus</taxon>
        <taxon>Bacillus cereus group</taxon>
    </lineage>
</organism>
<name>ATPL_BACC4</name>
<proteinExistence type="inferred from homology"/>
<reference key="1">
    <citation type="submission" date="2008-10" db="EMBL/GenBank/DDBJ databases">
        <title>Genome sequence of Bacillus cereus B4264.</title>
        <authorList>
            <person name="Dodson R.J."/>
            <person name="Durkin A.S."/>
            <person name="Rosovitz M.J."/>
            <person name="Rasko D.A."/>
            <person name="Hoffmaster A."/>
            <person name="Ravel J."/>
            <person name="Sutton G."/>
        </authorList>
    </citation>
    <scope>NUCLEOTIDE SEQUENCE [LARGE SCALE GENOMIC DNA]</scope>
    <source>
        <strain>B4264</strain>
    </source>
</reference>
<sequence>MSLGVIAAAIAIGLSALGAGIGNGLIVSRTIEGVARQPELKGALQTIMFIGVALVEALPIIGVVIAFIVMNK</sequence>
<protein>
    <recommendedName>
        <fullName evidence="1">ATP synthase subunit c</fullName>
    </recommendedName>
    <alternativeName>
        <fullName evidence="1">ATP synthase F(0) sector subunit c</fullName>
    </alternativeName>
    <alternativeName>
        <fullName evidence="1">F-type ATPase subunit c</fullName>
        <shortName evidence="1">F-ATPase subunit c</shortName>
    </alternativeName>
    <alternativeName>
        <fullName evidence="1">Lipid-binding protein</fullName>
    </alternativeName>
</protein>
<feature type="chain" id="PRO_1000184328" description="ATP synthase subunit c">
    <location>
        <begin position="1"/>
        <end position="72"/>
    </location>
</feature>
<feature type="transmembrane region" description="Helical" evidence="1">
    <location>
        <begin position="1"/>
        <end position="21"/>
    </location>
</feature>
<feature type="transmembrane region" description="Helical" evidence="1">
    <location>
        <begin position="49"/>
        <end position="69"/>
    </location>
</feature>
<feature type="site" description="Reversibly protonated during proton transport" evidence="1">
    <location>
        <position position="56"/>
    </location>
</feature>
<accession>B7HFK7</accession>